<evidence type="ECO:0000250" key="1"/>
<evidence type="ECO:0000255" key="2">
    <source>
        <dbReference type="PROSITE-ProRule" id="PRU00084"/>
    </source>
</evidence>
<evidence type="ECO:0000256" key="3">
    <source>
        <dbReference type="SAM" id="MobiDB-lite"/>
    </source>
</evidence>
<evidence type="ECO:0000305" key="4"/>
<evidence type="ECO:0000312" key="5">
    <source>
        <dbReference type="HGNC" id="HGNC:13278"/>
    </source>
</evidence>
<evidence type="ECO:0007744" key="6">
    <source>
    </source>
</evidence>
<evidence type="ECO:0007744" key="7">
    <source>
    </source>
</evidence>
<comment type="subcellular location">
    <subcellularLocation>
        <location evidence="1">Cytoplasm</location>
        <location evidence="1">Cytoskeleton</location>
    </subcellularLocation>
</comment>
<comment type="tissue specificity">
    <text>Expressed in many tissues. High levels of expression in brain, liver, thymus and peripheral blood leukocytes and low levels of expression in heart, kidney, testis and colon.</text>
</comment>
<feature type="chain" id="PRO_0000219401" description="Band 4.1-like protein 4A">
    <location>
        <begin position="1"/>
        <end position="686"/>
    </location>
</feature>
<feature type="domain" description="FERM" evidence="2">
    <location>
        <begin position="11"/>
        <end position="299"/>
    </location>
</feature>
<feature type="region of interest" description="Disordered" evidence="3">
    <location>
        <begin position="331"/>
        <end position="686"/>
    </location>
</feature>
<feature type="compositionally biased region" description="Polar residues" evidence="3">
    <location>
        <begin position="357"/>
        <end position="376"/>
    </location>
</feature>
<feature type="compositionally biased region" description="Polar residues" evidence="3">
    <location>
        <begin position="418"/>
        <end position="428"/>
    </location>
</feature>
<feature type="compositionally biased region" description="Low complexity" evidence="3">
    <location>
        <begin position="479"/>
        <end position="489"/>
    </location>
</feature>
<feature type="compositionally biased region" description="Basic and acidic residues" evidence="3">
    <location>
        <begin position="518"/>
        <end position="527"/>
    </location>
</feature>
<feature type="compositionally biased region" description="Basic and acidic residues" evidence="3">
    <location>
        <begin position="547"/>
        <end position="561"/>
    </location>
</feature>
<feature type="compositionally biased region" description="Basic residues" evidence="3">
    <location>
        <begin position="588"/>
        <end position="601"/>
    </location>
</feature>
<feature type="compositionally biased region" description="Basic and acidic residues" evidence="3">
    <location>
        <begin position="648"/>
        <end position="658"/>
    </location>
</feature>
<feature type="compositionally biased region" description="Polar residues" evidence="3">
    <location>
        <begin position="673"/>
        <end position="686"/>
    </location>
</feature>
<feature type="modified residue" description="Phosphoserine" evidence="7">
    <location>
        <position position="304"/>
    </location>
</feature>
<feature type="modified residue" description="Phosphoserine" evidence="7">
    <location>
        <position position="389"/>
    </location>
</feature>
<feature type="modified residue" description="Phosphoserine" evidence="7">
    <location>
        <position position="393"/>
    </location>
</feature>
<feature type="modified residue" description="Phosphoserine" evidence="6">
    <location>
        <position position="402"/>
    </location>
</feature>
<feature type="sequence variant" id="VAR_055537" description="In dbSNP:rs34008454.">
    <original>V</original>
    <variation>I</variation>
    <location>
        <position position="132"/>
    </location>
</feature>
<feature type="sequence conflict" description="In Ref. 3; BAB17229." evidence="4" ref="3">
    <original>S</original>
    <variation>T</variation>
    <location>
        <position position="366"/>
    </location>
</feature>
<feature type="sequence conflict" description="In Ref. 3; BAB17229." evidence="4" ref="3">
    <original>HAP</original>
    <variation>LMHS</variation>
    <location>
        <begin position="411"/>
        <end position="413"/>
    </location>
</feature>
<feature type="sequence conflict" description="In Ref. 3; BAB17229." evidence="4" ref="3">
    <original>Y</original>
    <variation>H</variation>
    <location>
        <position position="495"/>
    </location>
</feature>
<feature type="sequence conflict" description="In Ref. 2; AAI14943." evidence="4" ref="2">
    <original>S</original>
    <variation>F</variation>
    <location>
        <position position="564"/>
    </location>
</feature>
<feature type="sequence conflict" description="In Ref. 3; BAB17229." evidence="4" ref="3">
    <original>R</original>
    <variation>T</variation>
    <location>
        <position position="589"/>
    </location>
</feature>
<feature type="sequence conflict" description="In Ref. 3; BAB17229." evidence="4" ref="3">
    <original>RS</original>
    <variation>KL</variation>
    <location>
        <begin position="595"/>
        <end position="596"/>
    </location>
</feature>
<dbReference type="EMBL" id="AC010261">
    <property type="status" value="NOT_ANNOTATED_CDS"/>
    <property type="molecule type" value="Genomic_DNA"/>
</dbReference>
<dbReference type="EMBL" id="AC010265">
    <property type="status" value="NOT_ANNOTATED_CDS"/>
    <property type="molecule type" value="Genomic_DNA"/>
</dbReference>
<dbReference type="EMBL" id="AC104126">
    <property type="status" value="NOT_ANNOTATED_CDS"/>
    <property type="molecule type" value="Genomic_DNA"/>
</dbReference>
<dbReference type="EMBL" id="BC114632">
    <property type="status" value="NOT_ANNOTATED_CDS"/>
    <property type="molecule type" value="mRNA"/>
</dbReference>
<dbReference type="EMBL" id="BC114942">
    <property type="protein sequence ID" value="AAI14943.1"/>
    <property type="molecule type" value="mRNA"/>
</dbReference>
<dbReference type="EMBL" id="AB030240">
    <property type="protein sequence ID" value="BAB17229.1"/>
    <property type="molecule type" value="mRNA"/>
</dbReference>
<dbReference type="CCDS" id="CCDS43350.1"/>
<dbReference type="RefSeq" id="NP_001334816.1">
    <property type="nucleotide sequence ID" value="NM_001347887.1"/>
</dbReference>
<dbReference type="RefSeq" id="NP_071423.4">
    <property type="nucleotide sequence ID" value="NM_022140.4"/>
</dbReference>
<dbReference type="RefSeq" id="XP_047273430.1">
    <property type="nucleotide sequence ID" value="XM_047417474.1"/>
</dbReference>
<dbReference type="RefSeq" id="XP_047273431.1">
    <property type="nucleotide sequence ID" value="XM_047417475.1"/>
</dbReference>
<dbReference type="SMR" id="Q9HCS5"/>
<dbReference type="BioGRID" id="122058">
    <property type="interactions" value="130"/>
</dbReference>
<dbReference type="FunCoup" id="Q9HCS5">
    <property type="interactions" value="142"/>
</dbReference>
<dbReference type="IntAct" id="Q9HCS5">
    <property type="interactions" value="17"/>
</dbReference>
<dbReference type="STRING" id="9606.ENSP00000482810"/>
<dbReference type="GlyCosmos" id="Q9HCS5">
    <property type="glycosylation" value="1 site, 1 glycan"/>
</dbReference>
<dbReference type="GlyGen" id="Q9HCS5">
    <property type="glycosylation" value="1 site, 1 O-linked glycan (1 site)"/>
</dbReference>
<dbReference type="iPTMnet" id="Q9HCS5"/>
<dbReference type="PhosphoSitePlus" id="Q9HCS5"/>
<dbReference type="BioMuta" id="EPB41L4A"/>
<dbReference type="DMDM" id="292495006"/>
<dbReference type="jPOST" id="Q9HCS5"/>
<dbReference type="MassIVE" id="Q9HCS5"/>
<dbReference type="PaxDb" id="9606-ENSP00000261486"/>
<dbReference type="PeptideAtlas" id="Q9HCS5"/>
<dbReference type="ProteomicsDB" id="81795"/>
<dbReference type="Pumba" id="Q9HCS5"/>
<dbReference type="Antibodypedia" id="25339">
    <property type="antibodies" value="108 antibodies from 20 providers"/>
</dbReference>
<dbReference type="DNASU" id="64097"/>
<dbReference type="Ensembl" id="ENST00000261486.6">
    <property type="protein sequence ID" value="ENSP00000261486.5"/>
    <property type="gene ID" value="ENSG00000129595.14"/>
</dbReference>
<dbReference type="GeneID" id="64097"/>
<dbReference type="KEGG" id="hsa:64097"/>
<dbReference type="MANE-Select" id="ENST00000261486.6">
    <property type="protein sequence ID" value="ENSP00000261486.5"/>
    <property type="RefSeq nucleotide sequence ID" value="NM_022140.5"/>
    <property type="RefSeq protein sequence ID" value="NP_071423.4"/>
</dbReference>
<dbReference type="UCSC" id="uc003kpv.1">
    <property type="organism name" value="human"/>
</dbReference>
<dbReference type="AGR" id="HGNC:13278"/>
<dbReference type="CTD" id="64097"/>
<dbReference type="DisGeNET" id="64097"/>
<dbReference type="GeneCards" id="EPB41L4A"/>
<dbReference type="HGNC" id="HGNC:13278">
    <property type="gene designation" value="EPB41L4A"/>
</dbReference>
<dbReference type="HPA" id="ENSG00000129595">
    <property type="expression patterns" value="Low tissue specificity"/>
</dbReference>
<dbReference type="MalaCards" id="EPB41L4A"/>
<dbReference type="MIM" id="612141">
    <property type="type" value="gene"/>
</dbReference>
<dbReference type="neXtProt" id="NX_Q9HCS5"/>
<dbReference type="OpenTargets" id="ENSG00000129595"/>
<dbReference type="PharmGKB" id="PA134994123"/>
<dbReference type="VEuPathDB" id="HostDB:ENSG00000129595"/>
<dbReference type="eggNOG" id="KOG3530">
    <property type="taxonomic scope" value="Eukaryota"/>
</dbReference>
<dbReference type="GeneTree" id="ENSGT00940000159623"/>
<dbReference type="HOGENOM" id="CLU_003623_7_0_1"/>
<dbReference type="InParanoid" id="Q9HCS5"/>
<dbReference type="OMA" id="KHGRRIY"/>
<dbReference type="OrthoDB" id="6235974at2759"/>
<dbReference type="PAN-GO" id="Q9HCS5">
    <property type="GO annotations" value="2 GO annotations based on evolutionary models"/>
</dbReference>
<dbReference type="PhylomeDB" id="Q9HCS5"/>
<dbReference type="TreeFam" id="TF319780"/>
<dbReference type="PathwayCommons" id="Q9HCS5"/>
<dbReference type="SignaLink" id="Q9HCS5"/>
<dbReference type="BioGRID-ORCS" id="64097">
    <property type="hits" value="9 hits in 1159 CRISPR screens"/>
</dbReference>
<dbReference type="ChiTaRS" id="EPB41L4A">
    <property type="organism name" value="human"/>
</dbReference>
<dbReference type="GenomeRNAi" id="64097"/>
<dbReference type="Pharos" id="Q9HCS5">
    <property type="development level" value="Tbio"/>
</dbReference>
<dbReference type="PRO" id="PR:Q9HCS5"/>
<dbReference type="Proteomes" id="UP000005640">
    <property type="component" value="Chromosome 5"/>
</dbReference>
<dbReference type="RNAct" id="Q9HCS5">
    <property type="molecule type" value="protein"/>
</dbReference>
<dbReference type="Bgee" id="ENSG00000129595">
    <property type="expression patterns" value="Expressed in palpebral conjunctiva and 156 other cell types or tissues"/>
</dbReference>
<dbReference type="GO" id="GO:0005737">
    <property type="term" value="C:cytoplasm"/>
    <property type="evidence" value="ECO:0007669"/>
    <property type="project" value="UniProtKB-KW"/>
</dbReference>
<dbReference type="GO" id="GO:0005856">
    <property type="term" value="C:cytoskeleton"/>
    <property type="evidence" value="ECO:0000318"/>
    <property type="project" value="GO_Central"/>
</dbReference>
<dbReference type="GO" id="GO:0008092">
    <property type="term" value="F:cytoskeletal protein binding"/>
    <property type="evidence" value="ECO:0007669"/>
    <property type="project" value="InterPro"/>
</dbReference>
<dbReference type="GO" id="GO:0031032">
    <property type="term" value="P:actomyosin structure organization"/>
    <property type="evidence" value="ECO:0000318"/>
    <property type="project" value="GO_Central"/>
</dbReference>
<dbReference type="CDD" id="cd14473">
    <property type="entry name" value="FERM_B-lobe"/>
    <property type="match status" value="1"/>
</dbReference>
<dbReference type="CDD" id="cd13186">
    <property type="entry name" value="FERM_C_NBL4_NBL5"/>
    <property type="match status" value="1"/>
</dbReference>
<dbReference type="CDD" id="cd17107">
    <property type="entry name" value="FERM_F1_EPB41L4A"/>
    <property type="match status" value="1"/>
</dbReference>
<dbReference type="FunFam" id="3.10.20.90:FF:000116">
    <property type="entry name" value="band 4.1-like protein 4A isoform X1"/>
    <property type="match status" value="1"/>
</dbReference>
<dbReference type="FunFam" id="2.30.29.30:FF:000002">
    <property type="entry name" value="Band 4.1-like protein 5 isoform 1"/>
    <property type="match status" value="1"/>
</dbReference>
<dbReference type="FunFam" id="1.20.80.10:FF:000003">
    <property type="entry name" value="Tyrosine-protein phosphatase non-receptor type 4"/>
    <property type="match status" value="1"/>
</dbReference>
<dbReference type="Gene3D" id="1.20.80.10">
    <property type="match status" value="1"/>
</dbReference>
<dbReference type="Gene3D" id="3.10.20.90">
    <property type="entry name" value="Phosphatidylinositol 3-kinase Catalytic Subunit, Chain A, domain 1"/>
    <property type="match status" value="1"/>
</dbReference>
<dbReference type="Gene3D" id="2.30.29.30">
    <property type="entry name" value="Pleckstrin-homology domain (PH domain)/Phosphotyrosine-binding domain (PTB)"/>
    <property type="match status" value="1"/>
</dbReference>
<dbReference type="InterPro" id="IPR030696">
    <property type="entry name" value="Band4.1-like4A_FERM_F1"/>
</dbReference>
<dbReference type="InterPro" id="IPR019749">
    <property type="entry name" value="Band_41_domain"/>
</dbReference>
<dbReference type="InterPro" id="IPR000798">
    <property type="entry name" value="Ez/rad/moesin-like"/>
</dbReference>
<dbReference type="InterPro" id="IPR014847">
    <property type="entry name" value="FA"/>
</dbReference>
<dbReference type="InterPro" id="IPR014352">
    <property type="entry name" value="FERM/acyl-CoA-bd_prot_sf"/>
</dbReference>
<dbReference type="InterPro" id="IPR035963">
    <property type="entry name" value="FERM_2"/>
</dbReference>
<dbReference type="InterPro" id="IPR019748">
    <property type="entry name" value="FERM_central"/>
</dbReference>
<dbReference type="InterPro" id="IPR019747">
    <property type="entry name" value="FERM_CS"/>
</dbReference>
<dbReference type="InterPro" id="IPR000299">
    <property type="entry name" value="FERM_domain"/>
</dbReference>
<dbReference type="InterPro" id="IPR018979">
    <property type="entry name" value="FERM_N"/>
</dbReference>
<dbReference type="InterPro" id="IPR018980">
    <property type="entry name" value="FERM_PH-like_C"/>
</dbReference>
<dbReference type="InterPro" id="IPR011993">
    <property type="entry name" value="PH-like_dom_sf"/>
</dbReference>
<dbReference type="InterPro" id="IPR029071">
    <property type="entry name" value="Ubiquitin-like_domsf"/>
</dbReference>
<dbReference type="PANTHER" id="PTHR23280">
    <property type="entry name" value="4.1 G PROTEIN"/>
    <property type="match status" value="1"/>
</dbReference>
<dbReference type="PANTHER" id="PTHR23280:SF4">
    <property type="entry name" value="BAND 4.1-LIKE PROTEIN 4A"/>
    <property type="match status" value="1"/>
</dbReference>
<dbReference type="Pfam" id="PF08736">
    <property type="entry name" value="FA"/>
    <property type="match status" value="1"/>
</dbReference>
<dbReference type="Pfam" id="PF09380">
    <property type="entry name" value="FERM_C"/>
    <property type="match status" value="1"/>
</dbReference>
<dbReference type="Pfam" id="PF00373">
    <property type="entry name" value="FERM_M"/>
    <property type="match status" value="1"/>
</dbReference>
<dbReference type="Pfam" id="PF09379">
    <property type="entry name" value="FERM_N"/>
    <property type="match status" value="1"/>
</dbReference>
<dbReference type="PRINTS" id="PR00935">
    <property type="entry name" value="BAND41"/>
</dbReference>
<dbReference type="PRINTS" id="PR00661">
    <property type="entry name" value="ERMFAMILY"/>
</dbReference>
<dbReference type="SMART" id="SM00295">
    <property type="entry name" value="B41"/>
    <property type="match status" value="1"/>
</dbReference>
<dbReference type="SMART" id="SM01195">
    <property type="entry name" value="FA"/>
    <property type="match status" value="1"/>
</dbReference>
<dbReference type="SMART" id="SM01196">
    <property type="entry name" value="FERM_C"/>
    <property type="match status" value="1"/>
</dbReference>
<dbReference type="SUPFAM" id="SSF50729">
    <property type="entry name" value="PH domain-like"/>
    <property type="match status" value="1"/>
</dbReference>
<dbReference type="SUPFAM" id="SSF47031">
    <property type="entry name" value="Second domain of FERM"/>
    <property type="match status" value="1"/>
</dbReference>
<dbReference type="SUPFAM" id="SSF54236">
    <property type="entry name" value="Ubiquitin-like"/>
    <property type="match status" value="1"/>
</dbReference>
<dbReference type="PROSITE" id="PS00660">
    <property type="entry name" value="FERM_1"/>
    <property type="match status" value="1"/>
</dbReference>
<dbReference type="PROSITE" id="PS00661">
    <property type="entry name" value="FERM_2"/>
    <property type="match status" value="1"/>
</dbReference>
<dbReference type="PROSITE" id="PS50057">
    <property type="entry name" value="FERM_3"/>
    <property type="match status" value="1"/>
</dbReference>
<gene>
    <name evidence="5" type="primary">EPB41L4A</name>
    <name type="synonym">EPB41L4</name>
</gene>
<name>E41LA_HUMAN</name>
<sequence>MGCFCAVPEEFYCEVLLLDESKLTLTTQQQGIKKSTKGSVVLDHVFHHVNLVEIDYFGLRYCDRSHQTYWLDPAKTLAEHKELINTGPPYTLYFGIKFYAEDPCKLKEEITRYQFFLQVKQDVLQGRLPCPVNTAAQLGAYAIQSELGDYDPYKHTAGYVSEYRFVPDQKEELEEAIERIHKTLMGQIPSEAELNYLRTAKSLEMYGVDLHPVYGENKSEYFLGLTPVGVVVYKNKKQVGKYFWPRITKVHFKETQFELRVLGKDCNETSFFFEARSKTACKHLWKCSVEHHTFFRMPENESNSLSRKLSKFGSIRYKHRYSGRTALQMSRDLSIQLPRPDQNVTRSRSKTYPKRIAQTQPAESNSISRITANMENGENEGTIKIIAPSPVKSFKKAKNENSPDTQRSKSHAPWEENGPQSGLYNSPSDRTKSPKFPYTRRRNPSCGSDNDSVQPVRRRKAHNSGEDSDLKQRRRSRSRCNTSSGSESENSNREYRKKRNRIRQENDMVDSAPQWEAVLRRQKEKNQADPNNRRSRHRSRSRSPDIQAKEELWKHIQKELVDPSGLSEEQLKEIPYTKIETQGDPIRIRHSHSPRSYRQYRRSQCSDGERSVLSEVNSKTDLVPPLPVTRSSDAQGSGDATVHQRRNGSKDSLMEEKPQTSTNNLAGKHTAKTIKTIQASRLKTET</sequence>
<proteinExistence type="evidence at protein level"/>
<keyword id="KW-0963">Cytoplasm</keyword>
<keyword id="KW-0206">Cytoskeleton</keyword>
<keyword id="KW-0597">Phosphoprotein</keyword>
<keyword id="KW-1267">Proteomics identification</keyword>
<keyword id="KW-1185">Reference proteome</keyword>
<accession>Q9HCS5</accession>
<accession>A4FUI6</accession>
<organism>
    <name type="scientific">Homo sapiens</name>
    <name type="common">Human</name>
    <dbReference type="NCBI Taxonomy" id="9606"/>
    <lineage>
        <taxon>Eukaryota</taxon>
        <taxon>Metazoa</taxon>
        <taxon>Chordata</taxon>
        <taxon>Craniata</taxon>
        <taxon>Vertebrata</taxon>
        <taxon>Euteleostomi</taxon>
        <taxon>Mammalia</taxon>
        <taxon>Eutheria</taxon>
        <taxon>Euarchontoglires</taxon>
        <taxon>Primates</taxon>
        <taxon>Haplorrhini</taxon>
        <taxon>Catarrhini</taxon>
        <taxon>Hominidae</taxon>
        <taxon>Homo</taxon>
    </lineage>
</organism>
<reference key="1">
    <citation type="journal article" date="2004" name="Nature">
        <title>The DNA sequence and comparative analysis of human chromosome 5.</title>
        <authorList>
            <person name="Schmutz J."/>
            <person name="Martin J."/>
            <person name="Terry A."/>
            <person name="Couronne O."/>
            <person name="Grimwood J."/>
            <person name="Lowry S."/>
            <person name="Gordon L.A."/>
            <person name="Scott D."/>
            <person name="Xie G."/>
            <person name="Huang W."/>
            <person name="Hellsten U."/>
            <person name="Tran-Gyamfi M."/>
            <person name="She X."/>
            <person name="Prabhakar S."/>
            <person name="Aerts A."/>
            <person name="Altherr M."/>
            <person name="Bajorek E."/>
            <person name="Black S."/>
            <person name="Branscomb E."/>
            <person name="Caoile C."/>
            <person name="Challacombe J.F."/>
            <person name="Chan Y.M."/>
            <person name="Denys M."/>
            <person name="Detter J.C."/>
            <person name="Escobar J."/>
            <person name="Flowers D."/>
            <person name="Fotopulos D."/>
            <person name="Glavina T."/>
            <person name="Gomez M."/>
            <person name="Gonzales E."/>
            <person name="Goodstein D."/>
            <person name="Grigoriev I."/>
            <person name="Groza M."/>
            <person name="Hammon N."/>
            <person name="Hawkins T."/>
            <person name="Haydu L."/>
            <person name="Israni S."/>
            <person name="Jett J."/>
            <person name="Kadner K."/>
            <person name="Kimball H."/>
            <person name="Kobayashi A."/>
            <person name="Lopez F."/>
            <person name="Lou Y."/>
            <person name="Martinez D."/>
            <person name="Medina C."/>
            <person name="Morgan J."/>
            <person name="Nandkeshwar R."/>
            <person name="Noonan J.P."/>
            <person name="Pitluck S."/>
            <person name="Pollard M."/>
            <person name="Predki P."/>
            <person name="Priest J."/>
            <person name="Ramirez L."/>
            <person name="Retterer J."/>
            <person name="Rodriguez A."/>
            <person name="Rogers S."/>
            <person name="Salamov A."/>
            <person name="Salazar A."/>
            <person name="Thayer N."/>
            <person name="Tice H."/>
            <person name="Tsai M."/>
            <person name="Ustaszewska A."/>
            <person name="Vo N."/>
            <person name="Wheeler J."/>
            <person name="Wu K."/>
            <person name="Yang J."/>
            <person name="Dickson M."/>
            <person name="Cheng J.-F."/>
            <person name="Eichler E.E."/>
            <person name="Olsen A."/>
            <person name="Pennacchio L.A."/>
            <person name="Rokhsar D.S."/>
            <person name="Richardson P."/>
            <person name="Lucas S.M."/>
            <person name="Myers R.M."/>
            <person name="Rubin E.M."/>
        </authorList>
    </citation>
    <scope>NUCLEOTIDE SEQUENCE [LARGE SCALE GENOMIC DNA]</scope>
</reference>
<reference key="2">
    <citation type="journal article" date="2004" name="Genome Res.">
        <title>The status, quality, and expansion of the NIH full-length cDNA project: the Mammalian Gene Collection (MGC).</title>
        <authorList>
            <consortium name="The MGC Project Team"/>
        </authorList>
    </citation>
    <scope>NUCLEOTIDE SEQUENCE [LARGE SCALE MRNA] OF 1-638</scope>
</reference>
<reference key="3">
    <citation type="journal article" date="2000" name="Jpn. J. Cancer Res.">
        <title>Isolation and characterization of human NBL4, a gene involved in the beta-catenin/tcf signaling pathway.</title>
        <authorList>
            <person name="Ishiguro H."/>
            <person name="Furukawa Y."/>
            <person name="Daigo Y."/>
            <person name="Miyoshi Y."/>
            <person name="Nagasawa Y."/>
            <person name="Nishiwaki T."/>
            <person name="Kawasoe T."/>
            <person name="Fujita M."/>
            <person name="Satoh S."/>
            <person name="Miwa N."/>
            <person name="Fujii Y."/>
            <person name="Nakamura Y."/>
        </authorList>
    </citation>
    <scope>NUCLEOTIDE SEQUENCE [MRNA] OF 1-597</scope>
</reference>
<reference key="4">
    <citation type="journal article" date="2006" name="Cell">
        <title>Global, in vivo, and site-specific phosphorylation dynamics in signaling networks.</title>
        <authorList>
            <person name="Olsen J.V."/>
            <person name="Blagoev B."/>
            <person name="Gnad F."/>
            <person name="Macek B."/>
            <person name="Kumar C."/>
            <person name="Mortensen P."/>
            <person name="Mann M."/>
        </authorList>
    </citation>
    <scope>PHOSPHORYLATION [LARGE SCALE ANALYSIS] AT SER-402</scope>
    <scope>IDENTIFICATION BY MASS SPECTROMETRY [LARGE SCALE ANALYSIS]</scope>
    <source>
        <tissue>Cervix carcinoma</tissue>
    </source>
</reference>
<reference key="5">
    <citation type="journal article" date="2013" name="J. Proteome Res.">
        <title>Toward a comprehensive characterization of a human cancer cell phosphoproteome.</title>
        <authorList>
            <person name="Zhou H."/>
            <person name="Di Palma S."/>
            <person name="Preisinger C."/>
            <person name="Peng M."/>
            <person name="Polat A.N."/>
            <person name="Heck A.J."/>
            <person name="Mohammed S."/>
        </authorList>
    </citation>
    <scope>PHOSPHORYLATION [LARGE SCALE ANALYSIS] AT SER-304; SER-389 AND SER-393</scope>
    <scope>IDENTIFICATION BY MASS SPECTROMETRY [LARGE SCALE ANALYSIS]</scope>
    <source>
        <tissue>Cervix carcinoma</tissue>
    </source>
</reference>
<protein>
    <recommendedName>
        <fullName>Band 4.1-like protein 4A</fullName>
    </recommendedName>
    <alternativeName>
        <fullName evidence="5">Erythrocyte membrane protein band 4.1-like 4A</fullName>
    </alternativeName>
    <alternativeName>
        <fullName>Protein NBL4</fullName>
    </alternativeName>
</protein>